<name>RIBB_WIGBR</name>
<sequence length="213" mass="23510">MNKKLLSEFGDPVQRVKNALQSLKRGNGILVLDDENRENEGDMIFAAENMTVNQMALAIRFGSGIVCICLTKEKCKILNLPMMVKKNNSKYKTAFTVSIESAYGITTGVSAYDRIITIKTAIKDNAKPDDLNRPGHVFPLQAHPGGILSRAGHTEAAVDLTKLAGLKPAGVICEVMNDDGSMARMPEIINFSKKYNMPVLIIKDIIEYYNFIN</sequence>
<keyword id="KW-0456">Lyase</keyword>
<keyword id="KW-0460">Magnesium</keyword>
<keyword id="KW-0464">Manganese</keyword>
<keyword id="KW-0479">Metal-binding</keyword>
<keyword id="KW-1185">Reference proteome</keyword>
<keyword id="KW-0686">Riboflavin biosynthesis</keyword>
<organism>
    <name type="scientific">Wigglesworthia glossinidia brevipalpis</name>
    <dbReference type="NCBI Taxonomy" id="36870"/>
    <lineage>
        <taxon>Bacteria</taxon>
        <taxon>Pseudomonadati</taxon>
        <taxon>Pseudomonadota</taxon>
        <taxon>Gammaproteobacteria</taxon>
        <taxon>Enterobacterales</taxon>
        <taxon>Erwiniaceae</taxon>
        <taxon>Wigglesworthia</taxon>
    </lineage>
</organism>
<comment type="function">
    <text evidence="1">Catalyzes the conversion of D-ribulose 5-phosphate to formate and 3,4-dihydroxy-2-butanone 4-phosphate.</text>
</comment>
<comment type="catalytic activity">
    <reaction evidence="1">
        <text>D-ribulose 5-phosphate = (2S)-2-hydroxy-3-oxobutyl phosphate + formate + H(+)</text>
        <dbReference type="Rhea" id="RHEA:18457"/>
        <dbReference type="ChEBI" id="CHEBI:15378"/>
        <dbReference type="ChEBI" id="CHEBI:15740"/>
        <dbReference type="ChEBI" id="CHEBI:58121"/>
        <dbReference type="ChEBI" id="CHEBI:58830"/>
        <dbReference type="EC" id="4.1.99.12"/>
    </reaction>
</comment>
<comment type="cofactor">
    <cofactor evidence="1">
        <name>Mg(2+)</name>
        <dbReference type="ChEBI" id="CHEBI:18420"/>
    </cofactor>
    <cofactor evidence="1">
        <name>Mn(2+)</name>
        <dbReference type="ChEBI" id="CHEBI:29035"/>
    </cofactor>
    <text evidence="1">Binds 2 divalent metal cations per subunit. Magnesium or manganese.</text>
</comment>
<comment type="pathway">
    <text evidence="1">Cofactor biosynthesis; riboflavin biosynthesis; 2-hydroxy-3-oxobutyl phosphate from D-ribulose 5-phosphate: step 1/1.</text>
</comment>
<comment type="subunit">
    <text evidence="1">Homodimer.</text>
</comment>
<comment type="similarity">
    <text evidence="1">Belongs to the DHBP synthase family.</text>
</comment>
<proteinExistence type="inferred from homology"/>
<dbReference type="EC" id="4.1.99.12" evidence="1"/>
<dbReference type="EMBL" id="BA000021">
    <property type="protein sequence ID" value="BAC24383.1"/>
    <property type="molecule type" value="Genomic_DNA"/>
</dbReference>
<dbReference type="SMR" id="Q8D2W5"/>
<dbReference type="STRING" id="36870.gene:10368729"/>
<dbReference type="KEGG" id="wbr:ribB"/>
<dbReference type="eggNOG" id="COG0108">
    <property type="taxonomic scope" value="Bacteria"/>
</dbReference>
<dbReference type="HOGENOM" id="CLU_020273_3_0_6"/>
<dbReference type="OrthoDB" id="9793111at2"/>
<dbReference type="UniPathway" id="UPA00275">
    <property type="reaction ID" value="UER00399"/>
</dbReference>
<dbReference type="Proteomes" id="UP000000562">
    <property type="component" value="Chromosome"/>
</dbReference>
<dbReference type="GO" id="GO:0005829">
    <property type="term" value="C:cytosol"/>
    <property type="evidence" value="ECO:0007669"/>
    <property type="project" value="TreeGrafter"/>
</dbReference>
<dbReference type="GO" id="GO:0008686">
    <property type="term" value="F:3,4-dihydroxy-2-butanone-4-phosphate synthase activity"/>
    <property type="evidence" value="ECO:0007669"/>
    <property type="project" value="UniProtKB-UniRule"/>
</dbReference>
<dbReference type="GO" id="GO:0000287">
    <property type="term" value="F:magnesium ion binding"/>
    <property type="evidence" value="ECO:0007669"/>
    <property type="project" value="UniProtKB-UniRule"/>
</dbReference>
<dbReference type="GO" id="GO:0030145">
    <property type="term" value="F:manganese ion binding"/>
    <property type="evidence" value="ECO:0007669"/>
    <property type="project" value="UniProtKB-UniRule"/>
</dbReference>
<dbReference type="GO" id="GO:0009231">
    <property type="term" value="P:riboflavin biosynthetic process"/>
    <property type="evidence" value="ECO:0007669"/>
    <property type="project" value="UniProtKB-UniRule"/>
</dbReference>
<dbReference type="FunFam" id="3.90.870.10:FF:000002">
    <property type="entry name" value="3,4-dihydroxy-2-butanone 4-phosphate synthase"/>
    <property type="match status" value="1"/>
</dbReference>
<dbReference type="Gene3D" id="3.90.870.10">
    <property type="entry name" value="DHBP synthase"/>
    <property type="match status" value="1"/>
</dbReference>
<dbReference type="HAMAP" id="MF_00180">
    <property type="entry name" value="RibB"/>
    <property type="match status" value="1"/>
</dbReference>
<dbReference type="InterPro" id="IPR017945">
    <property type="entry name" value="DHBP_synth_RibB-like_a/b_dom"/>
</dbReference>
<dbReference type="InterPro" id="IPR000422">
    <property type="entry name" value="DHBP_synthase_RibB"/>
</dbReference>
<dbReference type="NCBIfam" id="TIGR00506">
    <property type="entry name" value="ribB"/>
    <property type="match status" value="1"/>
</dbReference>
<dbReference type="PANTHER" id="PTHR21327:SF38">
    <property type="entry name" value="3,4-DIHYDROXY-2-BUTANONE 4-PHOSPHATE SYNTHASE"/>
    <property type="match status" value="1"/>
</dbReference>
<dbReference type="PANTHER" id="PTHR21327">
    <property type="entry name" value="GTP CYCLOHYDROLASE II-RELATED"/>
    <property type="match status" value="1"/>
</dbReference>
<dbReference type="Pfam" id="PF00926">
    <property type="entry name" value="DHBP_synthase"/>
    <property type="match status" value="1"/>
</dbReference>
<dbReference type="SUPFAM" id="SSF55821">
    <property type="entry name" value="YrdC/RibB"/>
    <property type="match status" value="1"/>
</dbReference>
<feature type="chain" id="PRO_0000151819" description="3,4-dihydroxy-2-butanone 4-phosphate synthase">
    <location>
        <begin position="1"/>
        <end position="213"/>
    </location>
</feature>
<feature type="binding site" evidence="1">
    <location>
        <begin position="37"/>
        <end position="38"/>
    </location>
    <ligand>
        <name>D-ribulose 5-phosphate</name>
        <dbReference type="ChEBI" id="CHEBI:58121"/>
    </ligand>
</feature>
<feature type="binding site" evidence="1">
    <location>
        <position position="38"/>
    </location>
    <ligand>
        <name>Mg(2+)</name>
        <dbReference type="ChEBI" id="CHEBI:18420"/>
        <label>1</label>
    </ligand>
</feature>
<feature type="binding site" evidence="1">
    <location>
        <position position="38"/>
    </location>
    <ligand>
        <name>Mg(2+)</name>
        <dbReference type="ChEBI" id="CHEBI:18420"/>
        <label>2</label>
    </ligand>
</feature>
<feature type="binding site" evidence="1">
    <location>
        <position position="42"/>
    </location>
    <ligand>
        <name>D-ribulose 5-phosphate</name>
        <dbReference type="ChEBI" id="CHEBI:58121"/>
    </ligand>
</feature>
<feature type="binding site" evidence="1">
    <location>
        <begin position="150"/>
        <end position="154"/>
    </location>
    <ligand>
        <name>D-ribulose 5-phosphate</name>
        <dbReference type="ChEBI" id="CHEBI:58121"/>
    </ligand>
</feature>
<feature type="binding site" evidence="1">
    <location>
        <position position="153"/>
    </location>
    <ligand>
        <name>Mg(2+)</name>
        <dbReference type="ChEBI" id="CHEBI:18420"/>
        <label>2</label>
    </ligand>
</feature>
<feature type="binding site" evidence="1">
    <location>
        <position position="174"/>
    </location>
    <ligand>
        <name>D-ribulose 5-phosphate</name>
        <dbReference type="ChEBI" id="CHEBI:58121"/>
    </ligand>
</feature>
<feature type="site" description="Essential for catalytic activity" evidence="1">
    <location>
        <position position="136"/>
    </location>
</feature>
<feature type="site" description="Essential for catalytic activity" evidence="1">
    <location>
        <position position="174"/>
    </location>
</feature>
<accession>Q8D2W5</accession>
<evidence type="ECO:0000255" key="1">
    <source>
        <dbReference type="HAMAP-Rule" id="MF_00180"/>
    </source>
</evidence>
<gene>
    <name evidence="1" type="primary">ribB</name>
    <name type="ordered locus">WIGBR2370</name>
</gene>
<reference key="1">
    <citation type="journal article" date="2002" name="Nat. Genet.">
        <title>Genome sequence of the endocellular obligate symbiont of tsetse flies, Wigglesworthia glossinidia.</title>
        <authorList>
            <person name="Akman L."/>
            <person name="Yamashita A."/>
            <person name="Watanabe H."/>
            <person name="Oshima K."/>
            <person name="Shiba T."/>
            <person name="Hattori M."/>
            <person name="Aksoy S."/>
        </authorList>
    </citation>
    <scope>NUCLEOTIDE SEQUENCE [LARGE SCALE GENOMIC DNA]</scope>
</reference>
<protein>
    <recommendedName>
        <fullName evidence="1">3,4-dihydroxy-2-butanone 4-phosphate synthase</fullName>
        <shortName evidence="1">DHBP synthase</shortName>
        <ecNumber evidence="1">4.1.99.12</ecNumber>
    </recommendedName>
</protein>